<dbReference type="EC" id="2.3.1.29" evidence="4"/>
<dbReference type="EMBL" id="AF077740">
    <property type="protein sequence ID" value="AAC27720.1"/>
    <property type="molecule type" value="mRNA"/>
</dbReference>
<dbReference type="EMBL" id="AK123190">
    <property type="protein sequence ID" value="BAC85552.1"/>
    <property type="status" value="ALT_FRAME"/>
    <property type="molecule type" value="mRNA"/>
</dbReference>
<dbReference type="EMBL" id="Z97630">
    <property type="status" value="NOT_ANNOTATED_CDS"/>
    <property type="molecule type" value="Genomic_DNA"/>
</dbReference>
<dbReference type="EMBL" id="BC014457">
    <property type="protein sequence ID" value="AAH14457.1"/>
    <property type="molecule type" value="mRNA"/>
</dbReference>
<dbReference type="CCDS" id="CCDS13957.1">
    <molecule id="O75600-1"/>
</dbReference>
<dbReference type="CCDS" id="CCDS54527.1">
    <molecule id="O75600-2"/>
</dbReference>
<dbReference type="RefSeq" id="NP_001165161.1">
    <molecule id="O75600-2"/>
    <property type="nucleotide sequence ID" value="NM_001171690.2"/>
</dbReference>
<dbReference type="RefSeq" id="NP_055106.1">
    <molecule id="O75600-1"/>
    <property type="nucleotide sequence ID" value="NM_014291.4"/>
</dbReference>
<dbReference type="RefSeq" id="XP_005261467.1">
    <molecule id="O75600-2"/>
    <property type="nucleotide sequence ID" value="XM_005261410.5"/>
</dbReference>
<dbReference type="RefSeq" id="XP_016884166.1">
    <molecule id="O75600-1"/>
    <property type="nucleotide sequence ID" value="XM_017028677.3"/>
</dbReference>
<dbReference type="SMR" id="O75600"/>
<dbReference type="BioGRID" id="117027">
    <property type="interactions" value="66"/>
</dbReference>
<dbReference type="FunCoup" id="O75600">
    <property type="interactions" value="985"/>
</dbReference>
<dbReference type="IntAct" id="O75600">
    <property type="interactions" value="43"/>
</dbReference>
<dbReference type="MINT" id="O75600"/>
<dbReference type="STRING" id="9606.ENSP00000371110"/>
<dbReference type="DrugBank" id="DB00145">
    <property type="generic name" value="Glycine"/>
</dbReference>
<dbReference type="DrugBank" id="DB00114">
    <property type="generic name" value="Pyridoxal phosphate"/>
</dbReference>
<dbReference type="iPTMnet" id="O75600"/>
<dbReference type="PhosphoSitePlus" id="O75600"/>
<dbReference type="SwissPalm" id="O75600"/>
<dbReference type="BioMuta" id="GCAT"/>
<dbReference type="jPOST" id="O75600"/>
<dbReference type="MassIVE" id="O75600"/>
<dbReference type="PaxDb" id="9606-ENSP00000371110"/>
<dbReference type="PeptideAtlas" id="O75600"/>
<dbReference type="ProteomicsDB" id="15221"/>
<dbReference type="ProteomicsDB" id="50106">
    <molecule id="O75600-1"/>
</dbReference>
<dbReference type="Pumba" id="O75600"/>
<dbReference type="Antibodypedia" id="12139">
    <property type="antibodies" value="121 antibodies from 27 providers"/>
</dbReference>
<dbReference type="DNASU" id="23464"/>
<dbReference type="Ensembl" id="ENST00000248924.11">
    <molecule id="O75600-1"/>
    <property type="protein sequence ID" value="ENSP00000248924.6"/>
    <property type="gene ID" value="ENSG00000100116.17"/>
</dbReference>
<dbReference type="Ensembl" id="ENST00000323205.10">
    <molecule id="O75600-2"/>
    <property type="protein sequence ID" value="ENSP00000371110.3"/>
    <property type="gene ID" value="ENSG00000100116.17"/>
</dbReference>
<dbReference type="GeneID" id="23464"/>
<dbReference type="KEGG" id="hsa:23464"/>
<dbReference type="MANE-Select" id="ENST00000248924.11">
    <property type="protein sequence ID" value="ENSP00000248924.6"/>
    <property type="RefSeq nucleotide sequence ID" value="NM_014291.4"/>
    <property type="RefSeq protein sequence ID" value="NP_055106.1"/>
</dbReference>
<dbReference type="UCSC" id="uc003atz.4">
    <molecule id="O75600-1"/>
    <property type="organism name" value="human"/>
</dbReference>
<dbReference type="AGR" id="HGNC:4188"/>
<dbReference type="CTD" id="23464"/>
<dbReference type="DisGeNET" id="23464"/>
<dbReference type="GeneCards" id="GCAT"/>
<dbReference type="HGNC" id="HGNC:4188">
    <property type="gene designation" value="GCAT"/>
</dbReference>
<dbReference type="HPA" id="ENSG00000100116">
    <property type="expression patterns" value="Tissue enhanced (pancreas)"/>
</dbReference>
<dbReference type="MIM" id="607422">
    <property type="type" value="gene"/>
</dbReference>
<dbReference type="neXtProt" id="NX_O75600"/>
<dbReference type="OpenTargets" id="ENSG00000100116"/>
<dbReference type="PharmGKB" id="PA28603"/>
<dbReference type="VEuPathDB" id="HostDB:ENSG00000100116"/>
<dbReference type="eggNOG" id="KOG1359">
    <property type="taxonomic scope" value="Eukaryota"/>
</dbReference>
<dbReference type="GeneTree" id="ENSGT00940000155729"/>
<dbReference type="HOGENOM" id="CLU_015846_11_0_1"/>
<dbReference type="InParanoid" id="O75600"/>
<dbReference type="OMA" id="GTHEYCD"/>
<dbReference type="OrthoDB" id="10263824at2759"/>
<dbReference type="PAN-GO" id="O75600">
    <property type="GO annotations" value="1 GO annotation based on evolutionary models"/>
</dbReference>
<dbReference type="PhylomeDB" id="O75600"/>
<dbReference type="TreeFam" id="TF105923"/>
<dbReference type="BioCyc" id="MetaCyc:HS01980-MONOMER"/>
<dbReference type="PathwayCommons" id="O75600"/>
<dbReference type="Reactome" id="R-HSA-8849175">
    <property type="pathway name" value="Threonine catabolism"/>
</dbReference>
<dbReference type="SignaLink" id="O75600"/>
<dbReference type="BioGRID-ORCS" id="23464">
    <property type="hits" value="16 hits in 1168 CRISPR screens"/>
</dbReference>
<dbReference type="ChiTaRS" id="GCAT">
    <property type="organism name" value="human"/>
</dbReference>
<dbReference type="GenomeRNAi" id="23464"/>
<dbReference type="Pharos" id="O75600">
    <property type="development level" value="Tbio"/>
</dbReference>
<dbReference type="PRO" id="PR:O75600"/>
<dbReference type="Proteomes" id="UP000005640">
    <property type="component" value="Chromosome 22"/>
</dbReference>
<dbReference type="RNAct" id="O75600">
    <property type="molecule type" value="protein"/>
</dbReference>
<dbReference type="Bgee" id="ENSG00000100116">
    <property type="expression patterns" value="Expressed in body of pancreas and 174 other cell types or tissues"/>
</dbReference>
<dbReference type="ExpressionAtlas" id="O75600">
    <property type="expression patterns" value="baseline and differential"/>
</dbReference>
<dbReference type="GO" id="GO:0005743">
    <property type="term" value="C:mitochondrial inner membrane"/>
    <property type="evidence" value="ECO:0000304"/>
    <property type="project" value="Reactome"/>
</dbReference>
<dbReference type="GO" id="GO:0005739">
    <property type="term" value="C:mitochondrion"/>
    <property type="evidence" value="ECO:0000314"/>
    <property type="project" value="HPA"/>
</dbReference>
<dbReference type="GO" id="GO:0016607">
    <property type="term" value="C:nuclear speck"/>
    <property type="evidence" value="ECO:0000314"/>
    <property type="project" value="HPA"/>
</dbReference>
<dbReference type="GO" id="GO:0005654">
    <property type="term" value="C:nucleoplasm"/>
    <property type="evidence" value="ECO:0000314"/>
    <property type="project" value="HPA"/>
</dbReference>
<dbReference type="GO" id="GO:0005634">
    <property type="term" value="C:nucleus"/>
    <property type="evidence" value="ECO:0000314"/>
    <property type="project" value="UniProtKB"/>
</dbReference>
<dbReference type="GO" id="GO:0008890">
    <property type="term" value="F:glycine C-acetyltransferase activity"/>
    <property type="evidence" value="ECO:0000303"/>
    <property type="project" value="UniProtKB"/>
</dbReference>
<dbReference type="GO" id="GO:0030170">
    <property type="term" value="F:pyridoxal phosphate binding"/>
    <property type="evidence" value="ECO:0007669"/>
    <property type="project" value="InterPro"/>
</dbReference>
<dbReference type="GO" id="GO:0006520">
    <property type="term" value="P:amino acid metabolic process"/>
    <property type="evidence" value="ECO:0000303"/>
    <property type="project" value="UniProtKB"/>
</dbReference>
<dbReference type="GO" id="GO:0009058">
    <property type="term" value="P:biosynthetic process"/>
    <property type="evidence" value="ECO:0007669"/>
    <property type="project" value="InterPro"/>
</dbReference>
<dbReference type="GO" id="GO:0006567">
    <property type="term" value="P:threonine catabolic process"/>
    <property type="evidence" value="ECO:0007669"/>
    <property type="project" value="InterPro"/>
</dbReference>
<dbReference type="CDD" id="cd06454">
    <property type="entry name" value="KBL_like"/>
    <property type="match status" value="1"/>
</dbReference>
<dbReference type="FunFam" id="3.90.1150.10:FF:000004">
    <property type="entry name" value="2-amino-3-ketobutyrate coenzyme A ligase"/>
    <property type="match status" value="1"/>
</dbReference>
<dbReference type="FunFam" id="3.40.640.10:FF:000006">
    <property type="entry name" value="5-aminolevulinate synthase, mitochondrial"/>
    <property type="match status" value="1"/>
</dbReference>
<dbReference type="Gene3D" id="3.90.1150.10">
    <property type="entry name" value="Aspartate Aminotransferase, domain 1"/>
    <property type="match status" value="1"/>
</dbReference>
<dbReference type="Gene3D" id="3.40.640.10">
    <property type="entry name" value="Type I PLP-dependent aspartate aminotransferase-like (Major domain)"/>
    <property type="match status" value="1"/>
</dbReference>
<dbReference type="HAMAP" id="MF_00985">
    <property type="entry name" value="2am3keto_CoA_ligase"/>
    <property type="match status" value="1"/>
</dbReference>
<dbReference type="InterPro" id="IPR011282">
    <property type="entry name" value="2am3keto_CoA_ligase"/>
</dbReference>
<dbReference type="InterPro" id="IPR001917">
    <property type="entry name" value="Aminotrans_II_pyridoxalP_BS"/>
</dbReference>
<dbReference type="InterPro" id="IPR004839">
    <property type="entry name" value="Aminotransferase_I/II_large"/>
</dbReference>
<dbReference type="InterPro" id="IPR050087">
    <property type="entry name" value="AON_synthase_class-II"/>
</dbReference>
<dbReference type="InterPro" id="IPR015424">
    <property type="entry name" value="PyrdxlP-dep_Trfase"/>
</dbReference>
<dbReference type="InterPro" id="IPR015421">
    <property type="entry name" value="PyrdxlP-dep_Trfase_major"/>
</dbReference>
<dbReference type="InterPro" id="IPR015422">
    <property type="entry name" value="PyrdxlP-dep_Trfase_small"/>
</dbReference>
<dbReference type="NCBIfam" id="TIGR01822">
    <property type="entry name" value="2am3keto_CoA"/>
    <property type="match status" value="1"/>
</dbReference>
<dbReference type="NCBIfam" id="NF005394">
    <property type="entry name" value="PRK06939.1"/>
    <property type="match status" value="1"/>
</dbReference>
<dbReference type="PANTHER" id="PTHR13693:SF102">
    <property type="entry name" value="2-AMINO-3-KETOBUTYRATE COENZYME A LIGASE, MITOCHONDRIAL"/>
    <property type="match status" value="1"/>
</dbReference>
<dbReference type="PANTHER" id="PTHR13693">
    <property type="entry name" value="CLASS II AMINOTRANSFERASE/8-AMINO-7-OXONONANOATE SYNTHASE"/>
    <property type="match status" value="1"/>
</dbReference>
<dbReference type="Pfam" id="PF00155">
    <property type="entry name" value="Aminotran_1_2"/>
    <property type="match status" value="1"/>
</dbReference>
<dbReference type="SUPFAM" id="SSF53383">
    <property type="entry name" value="PLP-dependent transferases"/>
    <property type="match status" value="1"/>
</dbReference>
<dbReference type="PROSITE" id="PS00599">
    <property type="entry name" value="AA_TRANSFER_CLASS_2"/>
    <property type="match status" value="1"/>
</dbReference>
<protein>
    <recommendedName>
        <fullName>2-amino-3-ketobutyrate coenzyme A ligase, mitochondrial</fullName>
        <shortName>AKB ligase</shortName>
        <ecNumber evidence="4">2.3.1.29</ecNumber>
    </recommendedName>
    <alternativeName>
        <fullName>Aminoacetone synthase</fullName>
    </alternativeName>
    <alternativeName>
        <fullName>Glycine acetyltransferase</fullName>
    </alternativeName>
</protein>
<accession>O75600</accession>
<accession>E2QC23</accession>
<accession>Q6ZWF1</accession>
<accession>Q96CA9</accession>
<keyword id="KW-0007">Acetylation</keyword>
<keyword id="KW-0012">Acyltransferase</keyword>
<keyword id="KW-0025">Alternative splicing</keyword>
<keyword id="KW-0496">Mitochondrion</keyword>
<keyword id="KW-0539">Nucleus</keyword>
<keyword id="KW-1267">Proteomics identification</keyword>
<keyword id="KW-0663">Pyridoxal phosphate</keyword>
<keyword id="KW-1185">Reference proteome</keyword>
<keyword id="KW-0808">Transferase</keyword>
<keyword id="KW-0809">Transit peptide</keyword>
<gene>
    <name evidence="9" type="primary">GCAT</name>
    <name type="synonym">KBL</name>
</gene>
<name>KBL_HUMAN</name>
<reference key="1">
    <citation type="journal article" date="2000" name="Eur. J. Biochem.">
        <title>Molecular cloning of the human and murine 2-amino-3-ketobutyrate coenzyme A ligase cDNAs.</title>
        <authorList>
            <person name="Edgar A.J."/>
            <person name="Polak J.M."/>
        </authorList>
    </citation>
    <scope>NUCLEOTIDE SEQUENCE [MRNA] (ISOFORM 1)</scope>
    <scope>TISSUE SPECIFICITY</scope>
    <source>
        <tissue>Lung</tissue>
    </source>
</reference>
<reference key="2">
    <citation type="journal article" date="2004" name="Nat. Genet.">
        <title>Complete sequencing and characterization of 21,243 full-length human cDNAs.</title>
        <authorList>
            <person name="Ota T."/>
            <person name="Suzuki Y."/>
            <person name="Nishikawa T."/>
            <person name="Otsuki T."/>
            <person name="Sugiyama T."/>
            <person name="Irie R."/>
            <person name="Wakamatsu A."/>
            <person name="Hayashi K."/>
            <person name="Sato H."/>
            <person name="Nagai K."/>
            <person name="Kimura K."/>
            <person name="Makita H."/>
            <person name="Sekine M."/>
            <person name="Obayashi M."/>
            <person name="Nishi T."/>
            <person name="Shibahara T."/>
            <person name="Tanaka T."/>
            <person name="Ishii S."/>
            <person name="Yamamoto J."/>
            <person name="Saito K."/>
            <person name="Kawai Y."/>
            <person name="Isono Y."/>
            <person name="Nakamura Y."/>
            <person name="Nagahari K."/>
            <person name="Murakami K."/>
            <person name="Yasuda T."/>
            <person name="Iwayanagi T."/>
            <person name="Wagatsuma M."/>
            <person name="Shiratori A."/>
            <person name="Sudo H."/>
            <person name="Hosoiri T."/>
            <person name="Kaku Y."/>
            <person name="Kodaira H."/>
            <person name="Kondo H."/>
            <person name="Sugawara M."/>
            <person name="Takahashi M."/>
            <person name="Kanda K."/>
            <person name="Yokoi T."/>
            <person name="Furuya T."/>
            <person name="Kikkawa E."/>
            <person name="Omura Y."/>
            <person name="Abe K."/>
            <person name="Kamihara K."/>
            <person name="Katsuta N."/>
            <person name="Sato K."/>
            <person name="Tanikawa M."/>
            <person name="Yamazaki M."/>
            <person name="Ninomiya K."/>
            <person name="Ishibashi T."/>
            <person name="Yamashita H."/>
            <person name="Murakawa K."/>
            <person name="Fujimori K."/>
            <person name="Tanai H."/>
            <person name="Kimata M."/>
            <person name="Watanabe M."/>
            <person name="Hiraoka S."/>
            <person name="Chiba Y."/>
            <person name="Ishida S."/>
            <person name="Ono Y."/>
            <person name="Takiguchi S."/>
            <person name="Watanabe S."/>
            <person name="Yosida M."/>
            <person name="Hotuta T."/>
            <person name="Kusano J."/>
            <person name="Kanehori K."/>
            <person name="Takahashi-Fujii A."/>
            <person name="Hara H."/>
            <person name="Tanase T.-O."/>
            <person name="Nomura Y."/>
            <person name="Togiya S."/>
            <person name="Komai F."/>
            <person name="Hara R."/>
            <person name="Takeuchi K."/>
            <person name="Arita M."/>
            <person name="Imose N."/>
            <person name="Musashino K."/>
            <person name="Yuuki H."/>
            <person name="Oshima A."/>
            <person name="Sasaki N."/>
            <person name="Aotsuka S."/>
            <person name="Yoshikawa Y."/>
            <person name="Matsunawa H."/>
            <person name="Ichihara T."/>
            <person name="Shiohata N."/>
            <person name="Sano S."/>
            <person name="Moriya S."/>
            <person name="Momiyama H."/>
            <person name="Satoh N."/>
            <person name="Takami S."/>
            <person name="Terashima Y."/>
            <person name="Suzuki O."/>
            <person name="Nakagawa S."/>
            <person name="Senoh A."/>
            <person name="Mizoguchi H."/>
            <person name="Goto Y."/>
            <person name="Shimizu F."/>
            <person name="Wakebe H."/>
            <person name="Hishigaki H."/>
            <person name="Watanabe T."/>
            <person name="Sugiyama A."/>
            <person name="Takemoto M."/>
            <person name="Kawakami B."/>
            <person name="Yamazaki M."/>
            <person name="Watanabe K."/>
            <person name="Kumagai A."/>
            <person name="Itakura S."/>
            <person name="Fukuzumi Y."/>
            <person name="Fujimori Y."/>
            <person name="Komiyama M."/>
            <person name="Tashiro H."/>
            <person name="Tanigami A."/>
            <person name="Fujiwara T."/>
            <person name="Ono T."/>
            <person name="Yamada K."/>
            <person name="Fujii Y."/>
            <person name="Ozaki K."/>
            <person name="Hirao M."/>
            <person name="Ohmori Y."/>
            <person name="Kawabata A."/>
            <person name="Hikiji T."/>
            <person name="Kobatake N."/>
            <person name="Inagaki H."/>
            <person name="Ikema Y."/>
            <person name="Okamoto S."/>
            <person name="Okitani R."/>
            <person name="Kawakami T."/>
            <person name="Noguchi S."/>
            <person name="Itoh T."/>
            <person name="Shigeta K."/>
            <person name="Senba T."/>
            <person name="Matsumura K."/>
            <person name="Nakajima Y."/>
            <person name="Mizuno T."/>
            <person name="Morinaga M."/>
            <person name="Sasaki M."/>
            <person name="Togashi T."/>
            <person name="Oyama M."/>
            <person name="Hata H."/>
            <person name="Watanabe M."/>
            <person name="Komatsu T."/>
            <person name="Mizushima-Sugano J."/>
            <person name="Satoh T."/>
            <person name="Shirai Y."/>
            <person name="Takahashi Y."/>
            <person name="Nakagawa K."/>
            <person name="Okumura K."/>
            <person name="Nagase T."/>
            <person name="Nomura N."/>
            <person name="Kikuchi H."/>
            <person name="Masuho Y."/>
            <person name="Yamashita R."/>
            <person name="Nakai K."/>
            <person name="Yada T."/>
            <person name="Nakamura Y."/>
            <person name="Ohara O."/>
            <person name="Isogai T."/>
            <person name="Sugano S."/>
        </authorList>
    </citation>
    <scope>NUCLEOTIDE SEQUENCE [LARGE SCALE MRNA] (ISOFORM 2)</scope>
    <source>
        <tissue>Cerebellum</tissue>
    </source>
</reference>
<reference key="3">
    <citation type="journal article" date="1999" name="Nature">
        <title>The DNA sequence of human chromosome 22.</title>
        <authorList>
            <person name="Dunham I."/>
            <person name="Hunt A.R."/>
            <person name="Collins J.E."/>
            <person name="Bruskiewich R."/>
            <person name="Beare D.M."/>
            <person name="Clamp M."/>
            <person name="Smink L.J."/>
            <person name="Ainscough R."/>
            <person name="Almeida J.P."/>
            <person name="Babbage A.K."/>
            <person name="Bagguley C."/>
            <person name="Bailey J."/>
            <person name="Barlow K.F."/>
            <person name="Bates K.N."/>
            <person name="Beasley O.P."/>
            <person name="Bird C.P."/>
            <person name="Blakey S.E."/>
            <person name="Bridgeman A.M."/>
            <person name="Buck D."/>
            <person name="Burgess J."/>
            <person name="Burrill W.D."/>
            <person name="Burton J."/>
            <person name="Carder C."/>
            <person name="Carter N.P."/>
            <person name="Chen Y."/>
            <person name="Clark G."/>
            <person name="Clegg S.M."/>
            <person name="Cobley V.E."/>
            <person name="Cole C.G."/>
            <person name="Collier R.E."/>
            <person name="Connor R."/>
            <person name="Conroy D."/>
            <person name="Corby N.R."/>
            <person name="Coville G.J."/>
            <person name="Cox A.V."/>
            <person name="Davis J."/>
            <person name="Dawson E."/>
            <person name="Dhami P.D."/>
            <person name="Dockree C."/>
            <person name="Dodsworth S.J."/>
            <person name="Durbin R.M."/>
            <person name="Ellington A.G."/>
            <person name="Evans K.L."/>
            <person name="Fey J.M."/>
            <person name="Fleming K."/>
            <person name="French L."/>
            <person name="Garner A.A."/>
            <person name="Gilbert J.G.R."/>
            <person name="Goward M.E."/>
            <person name="Grafham D.V."/>
            <person name="Griffiths M.N.D."/>
            <person name="Hall C."/>
            <person name="Hall R.E."/>
            <person name="Hall-Tamlyn G."/>
            <person name="Heathcott R.W."/>
            <person name="Ho S."/>
            <person name="Holmes S."/>
            <person name="Hunt S.E."/>
            <person name="Jones M.C."/>
            <person name="Kershaw J."/>
            <person name="Kimberley A.M."/>
            <person name="King A."/>
            <person name="Laird G.K."/>
            <person name="Langford C.F."/>
            <person name="Leversha M.A."/>
            <person name="Lloyd C."/>
            <person name="Lloyd D.M."/>
            <person name="Martyn I.D."/>
            <person name="Mashreghi-Mohammadi M."/>
            <person name="Matthews L.H."/>
            <person name="Mccann O.T."/>
            <person name="Mcclay J."/>
            <person name="Mclaren S."/>
            <person name="McMurray A.A."/>
            <person name="Milne S.A."/>
            <person name="Mortimore B.J."/>
            <person name="Odell C.N."/>
            <person name="Pavitt R."/>
            <person name="Pearce A.V."/>
            <person name="Pearson D."/>
            <person name="Phillimore B.J.C.T."/>
            <person name="Phillips S.H."/>
            <person name="Plumb R.W."/>
            <person name="Ramsay H."/>
            <person name="Ramsey Y."/>
            <person name="Rogers L."/>
            <person name="Ross M.T."/>
            <person name="Scott C.E."/>
            <person name="Sehra H.K."/>
            <person name="Skuce C.D."/>
            <person name="Smalley S."/>
            <person name="Smith M.L."/>
            <person name="Soderlund C."/>
            <person name="Spragon L."/>
            <person name="Steward C.A."/>
            <person name="Sulston J.E."/>
            <person name="Swann R.M."/>
            <person name="Vaudin M."/>
            <person name="Wall M."/>
            <person name="Wallis J.M."/>
            <person name="Whiteley M.N."/>
            <person name="Willey D.L."/>
            <person name="Williams L."/>
            <person name="Williams S.A."/>
            <person name="Williamson H."/>
            <person name="Wilmer T.E."/>
            <person name="Wilming L."/>
            <person name="Wright C.L."/>
            <person name="Hubbard T."/>
            <person name="Bentley D.R."/>
            <person name="Beck S."/>
            <person name="Rogers J."/>
            <person name="Shimizu N."/>
            <person name="Minoshima S."/>
            <person name="Kawasaki K."/>
            <person name="Sasaki T."/>
            <person name="Asakawa S."/>
            <person name="Kudoh J."/>
            <person name="Shintani A."/>
            <person name="Shibuya K."/>
            <person name="Yoshizaki Y."/>
            <person name="Aoki N."/>
            <person name="Mitsuyama S."/>
            <person name="Roe B.A."/>
            <person name="Chen F."/>
            <person name="Chu L."/>
            <person name="Crabtree J."/>
            <person name="Deschamps S."/>
            <person name="Do A."/>
            <person name="Do T."/>
            <person name="Dorman A."/>
            <person name="Fang F."/>
            <person name="Fu Y."/>
            <person name="Hu P."/>
            <person name="Hua A."/>
            <person name="Kenton S."/>
            <person name="Lai H."/>
            <person name="Lao H.I."/>
            <person name="Lewis J."/>
            <person name="Lewis S."/>
            <person name="Lin S.-P."/>
            <person name="Loh P."/>
            <person name="Malaj E."/>
            <person name="Nguyen T."/>
            <person name="Pan H."/>
            <person name="Phan S."/>
            <person name="Qi S."/>
            <person name="Qian Y."/>
            <person name="Ray L."/>
            <person name="Ren Q."/>
            <person name="Shaull S."/>
            <person name="Sloan D."/>
            <person name="Song L."/>
            <person name="Wang Q."/>
            <person name="Wang Y."/>
            <person name="Wang Z."/>
            <person name="White J."/>
            <person name="Willingham D."/>
            <person name="Wu H."/>
            <person name="Yao Z."/>
            <person name="Zhan M."/>
            <person name="Zhang G."/>
            <person name="Chissoe S."/>
            <person name="Murray J."/>
            <person name="Miller N."/>
            <person name="Minx P."/>
            <person name="Fulton R."/>
            <person name="Johnson D."/>
            <person name="Bemis G."/>
            <person name="Bentley D."/>
            <person name="Bradshaw H."/>
            <person name="Bourne S."/>
            <person name="Cordes M."/>
            <person name="Du Z."/>
            <person name="Fulton L."/>
            <person name="Goela D."/>
            <person name="Graves T."/>
            <person name="Hawkins J."/>
            <person name="Hinds K."/>
            <person name="Kemp K."/>
            <person name="Latreille P."/>
            <person name="Layman D."/>
            <person name="Ozersky P."/>
            <person name="Rohlfing T."/>
            <person name="Scheet P."/>
            <person name="Walker C."/>
            <person name="Wamsley A."/>
            <person name="Wohldmann P."/>
            <person name="Pepin K."/>
            <person name="Nelson J."/>
            <person name="Korf I."/>
            <person name="Bedell J.A."/>
            <person name="Hillier L.W."/>
            <person name="Mardis E."/>
            <person name="Waterston R."/>
            <person name="Wilson R."/>
            <person name="Emanuel B.S."/>
            <person name="Shaikh T."/>
            <person name="Kurahashi H."/>
            <person name="Saitta S."/>
            <person name="Budarf M.L."/>
            <person name="McDermid H.E."/>
            <person name="Johnson A."/>
            <person name="Wong A.C.C."/>
            <person name="Morrow B.E."/>
            <person name="Edelmann L."/>
            <person name="Kim U.J."/>
            <person name="Shizuya H."/>
            <person name="Simon M.I."/>
            <person name="Dumanski J.P."/>
            <person name="Peyrard M."/>
            <person name="Kedra D."/>
            <person name="Seroussi E."/>
            <person name="Fransson I."/>
            <person name="Tapia I."/>
            <person name="Bruder C.E."/>
            <person name="O'Brien K.P."/>
            <person name="Wilkinson P."/>
            <person name="Bodenteich A."/>
            <person name="Hartman K."/>
            <person name="Hu X."/>
            <person name="Khan A.S."/>
            <person name="Lane L."/>
            <person name="Tilahun Y."/>
            <person name="Wright H."/>
        </authorList>
    </citation>
    <scope>NUCLEOTIDE SEQUENCE [LARGE SCALE GENOMIC DNA]</scope>
</reference>
<reference key="4">
    <citation type="journal article" date="2004" name="Genome Res.">
        <title>The status, quality, and expansion of the NIH full-length cDNA project: the Mammalian Gene Collection (MGC).</title>
        <authorList>
            <consortium name="The MGC Project Team"/>
        </authorList>
    </citation>
    <scope>NUCLEOTIDE SEQUENCE [LARGE SCALE MRNA] (ISOFORM 1)</scope>
    <source>
        <tissue>Skin</tissue>
    </source>
</reference>
<reference key="5">
    <citation type="journal article" date="2007" name="Cell Stress Chaperones">
        <title>Nuclear translocation of 2-amino-3-ketobutyrate coenzyme A ligase by cold and osmotic stress.</title>
        <authorList>
            <person name="Hoshino A."/>
            <person name="Fujii H."/>
        </authorList>
    </citation>
    <scope>SUBCELLULAR LOCATION</scope>
</reference>
<reference key="6">
    <citation type="journal article" date="2011" name="BMC Syst. Biol.">
        <title>Initial characterization of the human central proteome.</title>
        <authorList>
            <person name="Burkard T.R."/>
            <person name="Planyavsky M."/>
            <person name="Kaupe I."/>
            <person name="Breitwieser F.P."/>
            <person name="Buerckstuemmer T."/>
            <person name="Bennett K.L."/>
            <person name="Superti-Furga G."/>
            <person name="Colinge J."/>
        </authorList>
    </citation>
    <scope>IDENTIFICATION BY MASS SPECTROMETRY [LARGE SCALE ANALYSIS]</scope>
</reference>
<reference key="7">
    <citation type="journal article" date="2014" name="J. Proteomics">
        <title>An enzyme assisted RP-RPLC approach for in-depth analysis of human liver phosphoproteome.</title>
        <authorList>
            <person name="Bian Y."/>
            <person name="Song C."/>
            <person name="Cheng K."/>
            <person name="Dong M."/>
            <person name="Wang F."/>
            <person name="Huang J."/>
            <person name="Sun D."/>
            <person name="Wang L."/>
            <person name="Ye M."/>
            <person name="Zou H."/>
        </authorList>
    </citation>
    <scope>IDENTIFICATION BY MASS SPECTROMETRY [LARGE SCALE ANALYSIS]</scope>
    <source>
        <tissue>Liver</tissue>
    </source>
</reference>
<reference key="8">
    <citation type="journal article" date="2015" name="Proteomics">
        <title>N-terminome analysis of the human mitochondrial proteome.</title>
        <authorList>
            <person name="Vaca Jacome A.S."/>
            <person name="Rabilloud T."/>
            <person name="Schaeffer-Reiss C."/>
            <person name="Rompais M."/>
            <person name="Ayoub D."/>
            <person name="Lane L."/>
            <person name="Bairoch A."/>
            <person name="Van Dorsselaer A."/>
            <person name="Carapito C."/>
        </authorList>
    </citation>
    <scope>IDENTIFICATION BY MASS SPECTROMETRY [LARGE SCALE ANALYSIS]</scope>
</reference>
<comment type="function">
    <text evidence="4">Pyridoxal phosphate (PLP) dependent enzyme, which catalyzes the cleavage of 2-amino-3-oxobutanoate to glycine and acetyl-CoA.</text>
</comment>
<comment type="catalytic activity">
    <reaction evidence="4">
        <text>glycine + acetyl-CoA = (2S)-2-amino-3-oxobutanoate + CoA</text>
        <dbReference type="Rhea" id="RHEA:20736"/>
        <dbReference type="ChEBI" id="CHEBI:57287"/>
        <dbReference type="ChEBI" id="CHEBI:57288"/>
        <dbReference type="ChEBI" id="CHEBI:57305"/>
        <dbReference type="ChEBI" id="CHEBI:78948"/>
        <dbReference type="EC" id="2.3.1.29"/>
    </reaction>
    <physiologicalReaction direction="right-to-left" evidence="4">
        <dbReference type="Rhea" id="RHEA:20738"/>
    </physiologicalReaction>
</comment>
<comment type="cofactor">
    <cofactor evidence="4">
        <name>pyridoxal 5'-phosphate</name>
        <dbReference type="ChEBI" id="CHEBI:597326"/>
    </cofactor>
</comment>
<comment type="subcellular location">
    <subcellularLocation>
        <location evidence="4">Mitochondrion</location>
    </subcellularLocation>
    <subcellularLocation>
        <location evidence="6">Nucleus</location>
    </subcellularLocation>
    <text evidence="6">Translocates to the nucleus upon cold and osmotic stress.</text>
</comment>
<comment type="alternative products">
    <event type="alternative splicing"/>
    <isoform>
        <id>O75600-1</id>
        <name>1</name>
        <sequence type="displayed"/>
    </isoform>
    <isoform>
        <id>O75600-2</id>
        <name>2</name>
        <sequence type="described" ref="VSP_044607"/>
    </isoform>
</comment>
<comment type="tissue specificity">
    <text evidence="5">Strongly expressed in heart, brain, liver and pancreas. Also found in lung.</text>
</comment>
<comment type="similarity">
    <text evidence="8">Belongs to the class-II pyridoxal-phosphate-dependent aminotransferase family.</text>
</comment>
<comment type="caution">
    <text evidence="8">One of the major routes for the degradation of L-threonine to glycine in both prokaryotes and eukaryotes takes place through a two-step biochemical pathway in mitochondria. In the first step, L-threonine is oxidized to (2S)-2-amino-3-oxobutanoate, by L-threonine 3-dehydrogenase tetramer (TDH). In the second step, mitochondrial 2-amino-3-ketobutyrate coenzyme A ligase (GCAT) catalyzes the reaction between (2S)-2-amino-3-oxobutanoate and coenzyme A to form glycine and acetyl-CoA. In human, however the enzyme thats catalyzes the fist reaction, TDH, is an expressed pseudogene encoding non-functional truncated proteins.</text>
</comment>
<comment type="sequence caution" evidence="8">
    <conflict type="frameshift">
        <sequence resource="EMBL-CDS" id="BAC85552"/>
    </conflict>
</comment>
<proteinExistence type="evidence at protein level"/>
<sequence length="419" mass="45285">MWPGNAWRAALFWVPRGRRAQSALAQLRGILEGELEGIRGAGTWKSERVITSRQGPHIRVDGVSGGILNFCANNYLGLSSHPEVIQAGLQALEEFGAGLSSVRFICGTQSIHKNLEAKIARFHQREDAILYPSCYDANAGLFEALLTPEDAVLSDELNHASIIDGIRLCKAHKYRYRHLDMADLEAKLQEAQKHRLRLVATDGAFSMDGDIAPLQEICCLASRYGALVFMDECHATGFLGPTGRGTDELLGVMDQVTIINSTLGKALGGASGGYTTGPGPLVSLLRQRARPYLFSNSLPPAVVGCASKALDLLMGSNTIVQSMAAKTQRFRSKMEAAGFTISGASHPICPVMLGDARLASRMADDMLKRGIFVIGFSYPVVPKGKARIRVQISAVHSEEDIDRCVEAFVEVGRLHGALP</sequence>
<feature type="transit peptide" description="Mitochondrion" evidence="4">
    <location>
        <begin position="1"/>
        <end position="21"/>
    </location>
</feature>
<feature type="chain" id="PRO_0000001246" description="2-amino-3-ketobutyrate coenzyme A ligase, mitochondrial">
    <location>
        <begin position="22"/>
        <end position="419"/>
    </location>
</feature>
<feature type="binding site" description="in other chain" evidence="3">
    <location>
        <begin position="134"/>
        <end position="135"/>
    </location>
    <ligand>
        <name>pyridoxal 5'-phosphate</name>
        <dbReference type="ChEBI" id="CHEBI:597326"/>
        <note>ligand shared between dimeric partners</note>
    </ligand>
</feature>
<feature type="binding site" evidence="3">
    <location>
        <position position="159"/>
    </location>
    <ligand>
        <name>substrate</name>
    </ligand>
</feature>
<feature type="binding site" description="in other chain" evidence="1 3">
    <location>
        <position position="206"/>
    </location>
    <ligand>
        <name>pyridoxal 5'-phosphate</name>
        <dbReference type="ChEBI" id="CHEBI:597326"/>
        <note>ligand shared between dimeric partners</note>
    </ligand>
</feature>
<feature type="binding site" description="in other chain" evidence="3">
    <location>
        <begin position="262"/>
        <end position="265"/>
    </location>
    <ligand>
        <name>pyridoxal 5'-phosphate</name>
        <dbReference type="ChEBI" id="CHEBI:597326"/>
        <note>ligand shared between dimeric partners</note>
    </ligand>
</feature>
<feature type="binding site" evidence="3">
    <location>
        <begin position="295"/>
        <end position="296"/>
    </location>
    <ligand>
        <name>pyridoxal 5'-phosphate</name>
        <dbReference type="ChEBI" id="CHEBI:597326"/>
        <note>ligand shared between dimeric partners</note>
    </ligand>
</feature>
<feature type="binding site" evidence="3">
    <location>
        <position position="389"/>
    </location>
    <ligand>
        <name>substrate</name>
    </ligand>
</feature>
<feature type="modified residue" description="N6-acetyllysine; alternate" evidence="2">
    <location>
        <position position="45"/>
    </location>
</feature>
<feature type="modified residue" description="N6-succinyllysine; alternate" evidence="2">
    <location>
        <position position="45"/>
    </location>
</feature>
<feature type="modified residue" description="N6-acetyllysine; alternate" evidence="2">
    <location>
        <position position="187"/>
    </location>
</feature>
<feature type="modified residue" description="N6-succinyllysine; alternate" evidence="2">
    <location>
        <position position="187"/>
    </location>
</feature>
<feature type="modified residue" description="N6-(pyridoxal phosphate)lysine" evidence="4">
    <location>
        <position position="265"/>
    </location>
</feature>
<feature type="modified residue" description="N6-succinyllysine" evidence="2">
    <location>
        <position position="326"/>
    </location>
</feature>
<feature type="modified residue" description="N6-succinyllysine" evidence="2">
    <location>
        <position position="368"/>
    </location>
</feature>
<feature type="modified residue" description="N6-acetyllysine; alternate" evidence="2">
    <location>
        <position position="383"/>
    </location>
</feature>
<feature type="modified residue" description="N6-succinyllysine; alternate" evidence="2">
    <location>
        <position position="383"/>
    </location>
</feature>
<feature type="splice variant" id="VSP_044607" description="In isoform 2." evidence="7">
    <original>G</original>
    <variation>GGPGTVIFPGLPLPHLSCCIHLLSFTS</variation>
    <location>
        <position position="65"/>
    </location>
</feature>
<feature type="sequence variant" id="VAR_015094" description="In dbSNP:rs710187.">
    <original>R</original>
    <variation>C</variation>
    <location>
        <position position="39"/>
    </location>
</feature>
<feature type="sequence variant" id="VAR_048229" description="In dbSNP:rs34468367.">
    <original>S</original>
    <variation>N</variation>
    <location>
        <position position="100"/>
    </location>
</feature>
<feature type="sequence conflict" description="In Ref. 4; AAH14457." evidence="8" ref="4">
    <original>R</original>
    <variation>W</variation>
    <location>
        <position position="387"/>
    </location>
</feature>
<feature type="sequence conflict" description="In Ref. 2; BAC85552." evidence="8" ref="2">
    <original>L</original>
    <variation>S</variation>
    <location sequence="O75600-2">
        <position position="77"/>
    </location>
</feature>
<evidence type="ECO:0000250" key="1"/>
<evidence type="ECO:0000250" key="2">
    <source>
        <dbReference type="UniProtKB" id="O88986"/>
    </source>
</evidence>
<evidence type="ECO:0000250" key="3">
    <source>
        <dbReference type="UniProtKB" id="P0AB77"/>
    </source>
</evidence>
<evidence type="ECO:0000250" key="4">
    <source>
        <dbReference type="UniProtKB" id="Q0P5L8"/>
    </source>
</evidence>
<evidence type="ECO:0000269" key="5">
    <source>
    </source>
</evidence>
<evidence type="ECO:0000269" key="6">
    <source>
    </source>
</evidence>
<evidence type="ECO:0000303" key="7">
    <source>
    </source>
</evidence>
<evidence type="ECO:0000305" key="8"/>
<evidence type="ECO:0000312" key="9">
    <source>
        <dbReference type="HGNC" id="HGNC:4188"/>
    </source>
</evidence>
<organism>
    <name type="scientific">Homo sapiens</name>
    <name type="common">Human</name>
    <dbReference type="NCBI Taxonomy" id="9606"/>
    <lineage>
        <taxon>Eukaryota</taxon>
        <taxon>Metazoa</taxon>
        <taxon>Chordata</taxon>
        <taxon>Craniata</taxon>
        <taxon>Vertebrata</taxon>
        <taxon>Euteleostomi</taxon>
        <taxon>Mammalia</taxon>
        <taxon>Eutheria</taxon>
        <taxon>Euarchontoglires</taxon>
        <taxon>Primates</taxon>
        <taxon>Haplorrhini</taxon>
        <taxon>Catarrhini</taxon>
        <taxon>Hominidae</taxon>
        <taxon>Homo</taxon>
    </lineage>
</organism>